<comment type="function">
    <text evidence="1">Modifies, by uridylylation and deuridylylation, the PII regulatory proteins (GlnB and homologs), in response to the nitrogen status of the cell that GlnD senses through the glutamine level. Under low glutamine levels, catalyzes the conversion of the PII proteins and UTP to PII-UMP and PPi, while under higher glutamine levels, GlnD hydrolyzes PII-UMP to PII and UMP (deuridylylation). Thus, controls uridylylation state and activity of the PII proteins, and plays an important role in the regulation of nitrogen assimilation and metabolism.</text>
</comment>
<comment type="catalytic activity">
    <reaction evidence="1">
        <text>[protein-PII]-L-tyrosine + UTP = [protein-PII]-uridylyl-L-tyrosine + diphosphate</text>
        <dbReference type="Rhea" id="RHEA:13673"/>
        <dbReference type="Rhea" id="RHEA-COMP:12147"/>
        <dbReference type="Rhea" id="RHEA-COMP:12148"/>
        <dbReference type="ChEBI" id="CHEBI:33019"/>
        <dbReference type="ChEBI" id="CHEBI:46398"/>
        <dbReference type="ChEBI" id="CHEBI:46858"/>
        <dbReference type="ChEBI" id="CHEBI:90602"/>
        <dbReference type="EC" id="2.7.7.59"/>
    </reaction>
</comment>
<comment type="catalytic activity">
    <reaction evidence="1">
        <text>[protein-PII]-uridylyl-L-tyrosine + H2O = [protein-PII]-L-tyrosine + UMP + H(+)</text>
        <dbReference type="Rhea" id="RHEA:48600"/>
        <dbReference type="Rhea" id="RHEA-COMP:12147"/>
        <dbReference type="Rhea" id="RHEA-COMP:12148"/>
        <dbReference type="ChEBI" id="CHEBI:15377"/>
        <dbReference type="ChEBI" id="CHEBI:15378"/>
        <dbReference type="ChEBI" id="CHEBI:46858"/>
        <dbReference type="ChEBI" id="CHEBI:57865"/>
        <dbReference type="ChEBI" id="CHEBI:90602"/>
    </reaction>
</comment>
<comment type="cofactor">
    <cofactor evidence="1">
        <name>Mg(2+)</name>
        <dbReference type="ChEBI" id="CHEBI:18420"/>
    </cofactor>
</comment>
<comment type="activity regulation">
    <text evidence="1">Uridylyltransferase (UTase) activity is inhibited by glutamine, while glutamine activates uridylyl-removing (UR) activity.</text>
</comment>
<comment type="domain">
    <text evidence="1">Has four distinct domains: an N-terminal nucleotidyltransferase (NT) domain responsible for UTase activity, a central HD domain that encodes UR activity, and two C-terminal ACT domains that seem to have a role in glutamine sensing.</text>
</comment>
<comment type="similarity">
    <text evidence="1">Belongs to the GlnD family.</text>
</comment>
<organism>
    <name type="scientific">Ruegeria pomeroyi (strain ATCC 700808 / DSM 15171 / DSS-3)</name>
    <name type="common">Silicibacter pomeroyi</name>
    <dbReference type="NCBI Taxonomy" id="246200"/>
    <lineage>
        <taxon>Bacteria</taxon>
        <taxon>Pseudomonadati</taxon>
        <taxon>Pseudomonadota</taxon>
        <taxon>Alphaproteobacteria</taxon>
        <taxon>Rhodobacterales</taxon>
        <taxon>Roseobacteraceae</taxon>
        <taxon>Ruegeria</taxon>
    </lineage>
</organism>
<evidence type="ECO:0000255" key="1">
    <source>
        <dbReference type="HAMAP-Rule" id="MF_00277"/>
    </source>
</evidence>
<evidence type="ECO:0000255" key="2">
    <source>
        <dbReference type="PROSITE-ProRule" id="PRU01175"/>
    </source>
</evidence>
<reference key="1">
    <citation type="journal article" date="2004" name="Nature">
        <title>Genome sequence of Silicibacter pomeroyi reveals adaptations to the marine environment.</title>
        <authorList>
            <person name="Moran M.A."/>
            <person name="Buchan A."/>
            <person name="Gonzalez J.M."/>
            <person name="Heidelberg J.F."/>
            <person name="Whitman W.B."/>
            <person name="Kiene R.P."/>
            <person name="Henriksen J.R."/>
            <person name="King G.M."/>
            <person name="Belas R."/>
            <person name="Fuqua C."/>
            <person name="Brinkac L.M."/>
            <person name="Lewis M."/>
            <person name="Johri S."/>
            <person name="Weaver B."/>
            <person name="Pai G."/>
            <person name="Eisen J.A."/>
            <person name="Rahe E."/>
            <person name="Sheldon W.M."/>
            <person name="Ye W."/>
            <person name="Miller T.R."/>
            <person name="Carlton J."/>
            <person name="Rasko D.A."/>
            <person name="Paulsen I.T."/>
            <person name="Ren Q."/>
            <person name="Daugherty S.C."/>
            <person name="DeBoy R.T."/>
            <person name="Dodson R.J."/>
            <person name="Durkin A.S."/>
            <person name="Madupu R."/>
            <person name="Nelson W.C."/>
            <person name="Sullivan S.A."/>
            <person name="Rosovitz M.J."/>
            <person name="Haft D.H."/>
            <person name="Selengut J."/>
            <person name="Ward N."/>
        </authorList>
    </citation>
    <scope>NUCLEOTIDE SEQUENCE [LARGE SCALE GENOMIC DNA]</scope>
    <source>
        <strain>ATCC 700808 / DSM 15171 / DSS-3</strain>
    </source>
</reference>
<reference key="2">
    <citation type="journal article" date="2014" name="Stand. Genomic Sci.">
        <title>An updated genome annotation for the model marine bacterium Ruegeria pomeroyi DSS-3.</title>
        <authorList>
            <person name="Rivers A.R."/>
            <person name="Smith C.B."/>
            <person name="Moran M.A."/>
        </authorList>
    </citation>
    <scope>GENOME REANNOTATION</scope>
    <source>
        <strain>ATCC 700808 / DSM 15171 / DSS-3</strain>
    </source>
</reference>
<sequence>MFDTPAVFARITEAAAEAADNAALRGAVVAILRDVQNAGRAAIAEGFAEDPFAARPLTRAYTYLTDGMVKTAMYVASEILHPLATPTQGERIAVLAVGGFGRGEMAPFSDVDLLFLTPYKITAWAESVIESMLYILWDLRLKVGHSSRTVKDCIRLGRDDFTIRTAMLEHRFLAGHAPLARSLDQRLKSELYKDTQREFIEAKLEERDARHRKQGERYMVEPNVKEGKGGLRDLQSLYWIAKYIYEVKETAELVPLGLFTPSEYRTFVQAEEFLWAVRAHLHLVTGRATEQLTFDLQVEVAARMGYQDRAGRRGVEVFMQKYFREATRVGELTRIFLTKLEAAHMKGAPLLERIFRRRRRIKQGYKVVRGRLDVVDPEAFLADKLNLLRIFEEALRTGMLIHPDAMRLVTANLDLIDDGMRNDKEARRIFLDLLLKHGNPERALRRMNELGVLSAFVPEFEPIVAMMQFNMYHSYTVDEHTIQTIVNLAQIEKGELVESLPLASSILKAGVNRKVLYVALLLHDIGKGRPEDHSILGARIARKVAPRLGLSKADCETVEWLVRYHLLMSDMAQKRDISDPRTVRDFAKAVQTTKRLDLLTVLTVCDIRGVGPNTWNNWKATLLRALHAETKRALEMGMEALNREGRGNEAKKALRTALSDWPAGEVKTEIARHYPPYWQGFNVETHVTFAEMLRQLEHSGDPGGIEIRLDPDEDRDATRACFAMADHPGIFSRMAGALALVGANVVDARSYTTKDGYVTDAFWIQDAEGHPYEAARLPRLSQMILKTLKGEVVARDALKSRDKIKKREKAFNVPTHITFDNEGSDIYTIIEVDTRDRPGLLYDLARALAAANVYIANAVIATYGEQVVDSFYVKDMFGLKYHSEAKQRTLETKLRKAITEGAERAAAS</sequence>
<dbReference type="EC" id="2.7.7.59" evidence="1"/>
<dbReference type="EC" id="3.1.4.-" evidence="1"/>
<dbReference type="EMBL" id="CP000031">
    <property type="protein sequence ID" value="AAV93715.1"/>
    <property type="molecule type" value="Genomic_DNA"/>
</dbReference>
<dbReference type="SMR" id="Q5LWE5"/>
<dbReference type="STRING" id="246200.SPO0397"/>
<dbReference type="PaxDb" id="246200-SPO0397"/>
<dbReference type="KEGG" id="sil:SPO0397"/>
<dbReference type="eggNOG" id="COG2844">
    <property type="taxonomic scope" value="Bacteria"/>
</dbReference>
<dbReference type="HOGENOM" id="CLU_012833_1_0_5"/>
<dbReference type="Proteomes" id="UP000001023">
    <property type="component" value="Chromosome"/>
</dbReference>
<dbReference type="GO" id="GO:0008773">
    <property type="term" value="F:[protein-PII] uridylyltransferase activity"/>
    <property type="evidence" value="ECO:0007669"/>
    <property type="project" value="UniProtKB-UniRule"/>
</dbReference>
<dbReference type="GO" id="GO:0008081">
    <property type="term" value="F:phosphoric diester hydrolase activity"/>
    <property type="evidence" value="ECO:0007669"/>
    <property type="project" value="UniProtKB-UniRule"/>
</dbReference>
<dbReference type="GO" id="GO:0006808">
    <property type="term" value="P:regulation of nitrogen utilization"/>
    <property type="evidence" value="ECO:0007669"/>
    <property type="project" value="UniProtKB-UniRule"/>
</dbReference>
<dbReference type="CDD" id="cd04899">
    <property type="entry name" value="ACT_ACR-UUR-like_2"/>
    <property type="match status" value="1"/>
</dbReference>
<dbReference type="CDD" id="cd04900">
    <property type="entry name" value="ACT_UUR-like_1"/>
    <property type="match status" value="1"/>
</dbReference>
<dbReference type="CDD" id="cd00077">
    <property type="entry name" value="HDc"/>
    <property type="match status" value="1"/>
</dbReference>
<dbReference type="CDD" id="cd05401">
    <property type="entry name" value="NT_GlnE_GlnD_like"/>
    <property type="match status" value="1"/>
</dbReference>
<dbReference type="Gene3D" id="3.30.460.10">
    <property type="entry name" value="Beta Polymerase, domain 2"/>
    <property type="match status" value="1"/>
</dbReference>
<dbReference type="Gene3D" id="1.10.3090.10">
    <property type="entry name" value="cca-adding enzyme, domain 2"/>
    <property type="match status" value="1"/>
</dbReference>
<dbReference type="HAMAP" id="MF_00277">
    <property type="entry name" value="PII_uridylyl_transf"/>
    <property type="match status" value="1"/>
</dbReference>
<dbReference type="InterPro" id="IPR045865">
    <property type="entry name" value="ACT-like_dom_sf"/>
</dbReference>
<dbReference type="InterPro" id="IPR002912">
    <property type="entry name" value="ACT_dom"/>
</dbReference>
<dbReference type="InterPro" id="IPR003607">
    <property type="entry name" value="HD/PDEase_dom"/>
</dbReference>
<dbReference type="InterPro" id="IPR006674">
    <property type="entry name" value="HD_domain"/>
</dbReference>
<dbReference type="InterPro" id="IPR043519">
    <property type="entry name" value="NT_sf"/>
</dbReference>
<dbReference type="InterPro" id="IPR013546">
    <property type="entry name" value="PII_UdlTrfase/GS_AdlTrfase"/>
</dbReference>
<dbReference type="InterPro" id="IPR010043">
    <property type="entry name" value="UTase/UR"/>
</dbReference>
<dbReference type="NCBIfam" id="NF003467">
    <property type="entry name" value="PRK05092.1"/>
    <property type="match status" value="1"/>
</dbReference>
<dbReference type="NCBIfam" id="TIGR01693">
    <property type="entry name" value="UTase_glnD"/>
    <property type="match status" value="1"/>
</dbReference>
<dbReference type="PANTHER" id="PTHR47320">
    <property type="entry name" value="BIFUNCTIONAL URIDYLYLTRANSFERASE/URIDYLYL-REMOVING ENZYME"/>
    <property type="match status" value="1"/>
</dbReference>
<dbReference type="PANTHER" id="PTHR47320:SF1">
    <property type="entry name" value="BIFUNCTIONAL URIDYLYLTRANSFERASE_URIDYLYL-REMOVING ENZYME"/>
    <property type="match status" value="1"/>
</dbReference>
<dbReference type="Pfam" id="PF24931">
    <property type="entry name" value="ACT_ACR9_3rd"/>
    <property type="match status" value="1"/>
</dbReference>
<dbReference type="Pfam" id="PF08335">
    <property type="entry name" value="GlnD_UR_UTase"/>
    <property type="match status" value="1"/>
</dbReference>
<dbReference type="Pfam" id="PF01966">
    <property type="entry name" value="HD"/>
    <property type="match status" value="1"/>
</dbReference>
<dbReference type="PIRSF" id="PIRSF006288">
    <property type="entry name" value="PII_uridyltransf"/>
    <property type="match status" value="1"/>
</dbReference>
<dbReference type="SMART" id="SM00471">
    <property type="entry name" value="HDc"/>
    <property type="match status" value="1"/>
</dbReference>
<dbReference type="SUPFAM" id="SSF55021">
    <property type="entry name" value="ACT-like"/>
    <property type="match status" value="2"/>
</dbReference>
<dbReference type="SUPFAM" id="SSF81301">
    <property type="entry name" value="Nucleotidyltransferase"/>
    <property type="match status" value="1"/>
</dbReference>
<dbReference type="SUPFAM" id="SSF81593">
    <property type="entry name" value="Nucleotidyltransferase substrate binding subunit/domain"/>
    <property type="match status" value="1"/>
</dbReference>
<dbReference type="SUPFAM" id="SSF81891">
    <property type="entry name" value="Poly A polymerase C-terminal region-like"/>
    <property type="match status" value="1"/>
</dbReference>
<dbReference type="PROSITE" id="PS51671">
    <property type="entry name" value="ACT"/>
    <property type="match status" value="2"/>
</dbReference>
<dbReference type="PROSITE" id="PS51831">
    <property type="entry name" value="HD"/>
    <property type="match status" value="1"/>
</dbReference>
<feature type="chain" id="PRO_0000192769" description="Bifunctional uridylyltransferase/uridylyl-removing enzyme">
    <location>
        <begin position="1"/>
        <end position="908"/>
    </location>
</feature>
<feature type="domain" description="HD" evidence="2">
    <location>
        <begin position="477"/>
        <end position="599"/>
    </location>
</feature>
<feature type="domain" description="ACT 1" evidence="1">
    <location>
        <begin position="719"/>
        <end position="801"/>
    </location>
</feature>
<feature type="domain" description="ACT 2" evidence="1">
    <location>
        <begin position="829"/>
        <end position="904"/>
    </location>
</feature>
<feature type="region of interest" description="Uridylyltransferase">
    <location>
        <begin position="1"/>
        <end position="360"/>
    </location>
</feature>
<feature type="region of interest" description="Uridylyl-removing">
    <location>
        <begin position="361"/>
        <end position="718"/>
    </location>
</feature>
<accession>Q5LWE5</accession>
<keyword id="KW-0378">Hydrolase</keyword>
<keyword id="KW-0460">Magnesium</keyword>
<keyword id="KW-0511">Multifunctional enzyme</keyword>
<keyword id="KW-0548">Nucleotidyltransferase</keyword>
<keyword id="KW-1185">Reference proteome</keyword>
<keyword id="KW-0677">Repeat</keyword>
<keyword id="KW-0808">Transferase</keyword>
<name>GLND_RUEPO</name>
<proteinExistence type="inferred from homology"/>
<gene>
    <name evidence="1" type="primary">glnD</name>
    <name type="ordered locus">SPO0397</name>
</gene>
<protein>
    <recommendedName>
        <fullName evidence="1">Bifunctional uridylyltransferase/uridylyl-removing enzyme</fullName>
        <shortName evidence="1">UTase/UR</shortName>
    </recommendedName>
    <alternativeName>
        <fullName evidence="1">Bifunctional [protein-PII] modification enzyme</fullName>
    </alternativeName>
    <alternativeName>
        <fullName evidence="1">Bifunctional nitrogen sensor protein</fullName>
    </alternativeName>
    <domain>
        <recommendedName>
            <fullName evidence="1">[Protein-PII] uridylyltransferase</fullName>
            <shortName evidence="1">PII uridylyltransferase</shortName>
            <shortName evidence="1">UTase</shortName>
            <ecNumber evidence="1">2.7.7.59</ecNumber>
        </recommendedName>
    </domain>
    <domain>
        <recommendedName>
            <fullName evidence="1">[Protein-PII]-UMP uridylyl-removing enzyme</fullName>
            <shortName evidence="1">UR</shortName>
            <ecNumber evidence="1">3.1.4.-</ecNumber>
        </recommendedName>
    </domain>
</protein>